<name>MURG_CALS4</name>
<dbReference type="EC" id="2.4.1.227" evidence="1"/>
<dbReference type="EMBL" id="AE008691">
    <property type="protein sequence ID" value="AAM24847.1"/>
    <property type="molecule type" value="Genomic_DNA"/>
</dbReference>
<dbReference type="RefSeq" id="WP_009611121.1">
    <property type="nucleotide sequence ID" value="NC_003869.1"/>
</dbReference>
<dbReference type="SMR" id="Q8R9G6"/>
<dbReference type="STRING" id="273068.TTE1645"/>
<dbReference type="CAZy" id="GT28">
    <property type="family name" value="Glycosyltransferase Family 28"/>
</dbReference>
<dbReference type="KEGG" id="tte:TTE1645"/>
<dbReference type="eggNOG" id="COG0707">
    <property type="taxonomic scope" value="Bacteria"/>
</dbReference>
<dbReference type="HOGENOM" id="CLU_037404_0_1_9"/>
<dbReference type="OrthoDB" id="9808936at2"/>
<dbReference type="UniPathway" id="UPA00219"/>
<dbReference type="Proteomes" id="UP000000555">
    <property type="component" value="Chromosome"/>
</dbReference>
<dbReference type="GO" id="GO:0005886">
    <property type="term" value="C:plasma membrane"/>
    <property type="evidence" value="ECO:0007669"/>
    <property type="project" value="UniProtKB-SubCell"/>
</dbReference>
<dbReference type="GO" id="GO:0051991">
    <property type="term" value="F:UDP-N-acetyl-D-glucosamine:N-acetylmuramoyl-L-alanyl-D-glutamyl-meso-2,6-diaminopimelyl-D-alanyl-D-alanine-diphosphoundecaprenol 4-beta-N-acetylglucosaminlytransferase activity"/>
    <property type="evidence" value="ECO:0007669"/>
    <property type="project" value="RHEA"/>
</dbReference>
<dbReference type="GO" id="GO:0050511">
    <property type="term" value="F:undecaprenyldiphospho-muramoylpentapeptide beta-N-acetylglucosaminyltransferase activity"/>
    <property type="evidence" value="ECO:0007669"/>
    <property type="project" value="UniProtKB-UniRule"/>
</dbReference>
<dbReference type="GO" id="GO:0005975">
    <property type="term" value="P:carbohydrate metabolic process"/>
    <property type="evidence" value="ECO:0007669"/>
    <property type="project" value="InterPro"/>
</dbReference>
<dbReference type="GO" id="GO:0051301">
    <property type="term" value="P:cell division"/>
    <property type="evidence" value="ECO:0007669"/>
    <property type="project" value="UniProtKB-KW"/>
</dbReference>
<dbReference type="GO" id="GO:0071555">
    <property type="term" value="P:cell wall organization"/>
    <property type="evidence" value="ECO:0007669"/>
    <property type="project" value="UniProtKB-KW"/>
</dbReference>
<dbReference type="GO" id="GO:0030259">
    <property type="term" value="P:lipid glycosylation"/>
    <property type="evidence" value="ECO:0007669"/>
    <property type="project" value="UniProtKB-UniRule"/>
</dbReference>
<dbReference type="GO" id="GO:0009252">
    <property type="term" value="P:peptidoglycan biosynthetic process"/>
    <property type="evidence" value="ECO:0007669"/>
    <property type="project" value="UniProtKB-UniRule"/>
</dbReference>
<dbReference type="GO" id="GO:0008360">
    <property type="term" value="P:regulation of cell shape"/>
    <property type="evidence" value="ECO:0007669"/>
    <property type="project" value="UniProtKB-KW"/>
</dbReference>
<dbReference type="CDD" id="cd03785">
    <property type="entry name" value="GT28_MurG"/>
    <property type="match status" value="1"/>
</dbReference>
<dbReference type="Gene3D" id="3.40.50.2000">
    <property type="entry name" value="Glycogen Phosphorylase B"/>
    <property type="match status" value="2"/>
</dbReference>
<dbReference type="HAMAP" id="MF_00033">
    <property type="entry name" value="MurG"/>
    <property type="match status" value="1"/>
</dbReference>
<dbReference type="InterPro" id="IPR006009">
    <property type="entry name" value="GlcNAc_MurG"/>
</dbReference>
<dbReference type="InterPro" id="IPR007235">
    <property type="entry name" value="Glyco_trans_28_C"/>
</dbReference>
<dbReference type="InterPro" id="IPR004276">
    <property type="entry name" value="GlycoTrans_28_N"/>
</dbReference>
<dbReference type="NCBIfam" id="TIGR01133">
    <property type="entry name" value="murG"/>
    <property type="match status" value="1"/>
</dbReference>
<dbReference type="PANTHER" id="PTHR21015:SF22">
    <property type="entry name" value="GLYCOSYLTRANSFERASE"/>
    <property type="match status" value="1"/>
</dbReference>
<dbReference type="PANTHER" id="PTHR21015">
    <property type="entry name" value="UDP-N-ACETYLGLUCOSAMINE--N-ACETYLMURAMYL-(PENTAPEPTIDE) PYROPHOSPHORYL-UNDECAPRENOL N-ACETYLGLUCOSAMINE TRANSFERASE 1"/>
    <property type="match status" value="1"/>
</dbReference>
<dbReference type="Pfam" id="PF04101">
    <property type="entry name" value="Glyco_tran_28_C"/>
    <property type="match status" value="1"/>
</dbReference>
<dbReference type="Pfam" id="PF03033">
    <property type="entry name" value="Glyco_transf_28"/>
    <property type="match status" value="1"/>
</dbReference>
<dbReference type="SUPFAM" id="SSF53756">
    <property type="entry name" value="UDP-Glycosyltransferase/glycogen phosphorylase"/>
    <property type="match status" value="1"/>
</dbReference>
<evidence type="ECO:0000255" key="1">
    <source>
        <dbReference type="HAMAP-Rule" id="MF_00033"/>
    </source>
</evidence>
<sequence>MRYLFAGGGTGGHIYPAVAIAKEILKNEQDAQILFVGTEKGLEKELVPREGFELVTIEVQGFKRKLSFDTLKTVYKAFTGFKQANKILKDFKPHVVIGTGGYVCGPVLMAAVIKRIPTLIHEQNAFPGLTNRLLSPFVDIVAVSFEDSVKYFKKAKKVVVTGNPIREELLRVKKEEGREKLGFSMSKPLVVSVGGSRGAEKINSTMVELLKIKDRKFQVLIITGSSNYDKVLEKVKKENVVLDDSVKIVPYSHEMQYVYAAADIMICRAGAITLSEITAVGVPSILIPSPYVANNHQEYNARLLERQGAFHVILEKDLDAKKLYEKIEYLLSEPSLLNEMREKAKSMSRTDASYKIYQLVKTIT</sequence>
<keyword id="KW-0131">Cell cycle</keyword>
<keyword id="KW-0132">Cell division</keyword>
<keyword id="KW-1003">Cell membrane</keyword>
<keyword id="KW-0133">Cell shape</keyword>
<keyword id="KW-0961">Cell wall biogenesis/degradation</keyword>
<keyword id="KW-0328">Glycosyltransferase</keyword>
<keyword id="KW-0472">Membrane</keyword>
<keyword id="KW-0573">Peptidoglycan synthesis</keyword>
<keyword id="KW-1185">Reference proteome</keyword>
<keyword id="KW-0808">Transferase</keyword>
<protein>
    <recommendedName>
        <fullName evidence="1">UDP-N-acetylglucosamine--N-acetylmuramyl-(pentapeptide) pyrophosphoryl-undecaprenol N-acetylglucosamine transferase</fullName>
        <ecNumber evidence="1">2.4.1.227</ecNumber>
    </recommendedName>
    <alternativeName>
        <fullName evidence="1">Undecaprenyl-PP-MurNAc-pentapeptide-UDPGlcNAc GlcNAc transferase</fullName>
    </alternativeName>
</protein>
<reference key="1">
    <citation type="journal article" date="2002" name="Genome Res.">
        <title>A complete sequence of the T. tengcongensis genome.</title>
        <authorList>
            <person name="Bao Q."/>
            <person name="Tian Y."/>
            <person name="Li W."/>
            <person name="Xu Z."/>
            <person name="Xuan Z."/>
            <person name="Hu S."/>
            <person name="Dong W."/>
            <person name="Yang J."/>
            <person name="Chen Y."/>
            <person name="Xue Y."/>
            <person name="Xu Y."/>
            <person name="Lai X."/>
            <person name="Huang L."/>
            <person name="Dong X."/>
            <person name="Ma Y."/>
            <person name="Ling L."/>
            <person name="Tan H."/>
            <person name="Chen R."/>
            <person name="Wang J."/>
            <person name="Yu J."/>
            <person name="Yang H."/>
        </authorList>
    </citation>
    <scope>NUCLEOTIDE SEQUENCE [LARGE SCALE GENOMIC DNA]</scope>
    <source>
        <strain>DSM 15242 / JCM 11007 / NBRC 100824 / MB4</strain>
    </source>
</reference>
<proteinExistence type="inferred from homology"/>
<feature type="chain" id="PRO_0000109232" description="UDP-N-acetylglucosamine--N-acetylmuramyl-(pentapeptide) pyrophosphoryl-undecaprenol N-acetylglucosamine transferase">
    <location>
        <begin position="1"/>
        <end position="364"/>
    </location>
</feature>
<feature type="binding site" evidence="1">
    <location>
        <begin position="10"/>
        <end position="12"/>
    </location>
    <ligand>
        <name>UDP-N-acetyl-alpha-D-glucosamine</name>
        <dbReference type="ChEBI" id="CHEBI:57705"/>
    </ligand>
</feature>
<feature type="binding site" evidence="1">
    <location>
        <position position="124"/>
    </location>
    <ligand>
        <name>UDP-N-acetyl-alpha-D-glucosamine</name>
        <dbReference type="ChEBI" id="CHEBI:57705"/>
    </ligand>
</feature>
<feature type="binding site" evidence="1">
    <location>
        <position position="166"/>
    </location>
    <ligand>
        <name>UDP-N-acetyl-alpha-D-glucosamine</name>
        <dbReference type="ChEBI" id="CHEBI:57705"/>
    </ligand>
</feature>
<feature type="binding site" evidence="1">
    <location>
        <position position="196"/>
    </location>
    <ligand>
        <name>UDP-N-acetyl-alpha-D-glucosamine</name>
        <dbReference type="ChEBI" id="CHEBI:57705"/>
    </ligand>
</feature>
<feature type="binding site" evidence="1">
    <location>
        <position position="297"/>
    </location>
    <ligand>
        <name>UDP-N-acetyl-alpha-D-glucosamine</name>
        <dbReference type="ChEBI" id="CHEBI:57705"/>
    </ligand>
</feature>
<accession>Q8R9G6</accession>
<organism>
    <name type="scientific">Caldanaerobacter subterraneus subsp. tengcongensis (strain DSM 15242 / JCM 11007 / NBRC 100824 / MB4)</name>
    <name type="common">Thermoanaerobacter tengcongensis</name>
    <dbReference type="NCBI Taxonomy" id="273068"/>
    <lineage>
        <taxon>Bacteria</taxon>
        <taxon>Bacillati</taxon>
        <taxon>Bacillota</taxon>
        <taxon>Clostridia</taxon>
        <taxon>Thermoanaerobacterales</taxon>
        <taxon>Thermoanaerobacteraceae</taxon>
        <taxon>Caldanaerobacter</taxon>
    </lineage>
</organism>
<gene>
    <name evidence="1" type="primary">murG</name>
    <name type="ordered locus">TTE1645</name>
</gene>
<comment type="function">
    <text evidence="1">Cell wall formation. Catalyzes the transfer of a GlcNAc subunit on undecaprenyl-pyrophosphoryl-MurNAc-pentapeptide (lipid intermediate I) to form undecaprenyl-pyrophosphoryl-MurNAc-(pentapeptide)GlcNAc (lipid intermediate II).</text>
</comment>
<comment type="catalytic activity">
    <reaction evidence="1">
        <text>di-trans,octa-cis-undecaprenyl diphospho-N-acetyl-alpha-D-muramoyl-L-alanyl-D-glutamyl-meso-2,6-diaminopimeloyl-D-alanyl-D-alanine + UDP-N-acetyl-alpha-D-glucosamine = di-trans,octa-cis-undecaprenyl diphospho-[N-acetyl-alpha-D-glucosaminyl-(1-&gt;4)]-N-acetyl-alpha-D-muramoyl-L-alanyl-D-glutamyl-meso-2,6-diaminopimeloyl-D-alanyl-D-alanine + UDP + H(+)</text>
        <dbReference type="Rhea" id="RHEA:31227"/>
        <dbReference type="ChEBI" id="CHEBI:15378"/>
        <dbReference type="ChEBI" id="CHEBI:57705"/>
        <dbReference type="ChEBI" id="CHEBI:58223"/>
        <dbReference type="ChEBI" id="CHEBI:61387"/>
        <dbReference type="ChEBI" id="CHEBI:61388"/>
        <dbReference type="EC" id="2.4.1.227"/>
    </reaction>
</comment>
<comment type="pathway">
    <text evidence="1">Cell wall biogenesis; peptidoglycan biosynthesis.</text>
</comment>
<comment type="subcellular location">
    <subcellularLocation>
        <location evidence="1">Cell membrane</location>
        <topology evidence="1">Peripheral membrane protein</topology>
        <orientation evidence="1">Cytoplasmic side</orientation>
    </subcellularLocation>
</comment>
<comment type="similarity">
    <text evidence="1">Belongs to the glycosyltransferase 28 family. MurG subfamily.</text>
</comment>